<keyword id="KW-0067">ATP-binding</keyword>
<keyword id="KW-0418">Kinase</keyword>
<keyword id="KW-0460">Magnesium</keyword>
<keyword id="KW-0479">Metal-binding</keyword>
<keyword id="KW-0511">Multifunctional enzyme</keyword>
<keyword id="KW-0547">Nucleotide-binding</keyword>
<keyword id="KW-0723">Serine/threonine-protein kinase</keyword>
<keyword id="KW-0808">Transferase</keyword>
<feature type="chain" id="PRO_1000139917" description="HPr kinase/phosphorylase">
    <location>
        <begin position="1"/>
        <end position="319"/>
    </location>
</feature>
<feature type="region of interest" description="Important for the catalytic mechanism of both phosphorylation and dephosphorylation" evidence="1">
    <location>
        <begin position="201"/>
        <end position="210"/>
    </location>
</feature>
<feature type="region of interest" description="Important for the catalytic mechanism of dephosphorylation" evidence="1">
    <location>
        <begin position="264"/>
        <end position="269"/>
    </location>
</feature>
<feature type="active site" evidence="1">
    <location>
        <position position="137"/>
    </location>
</feature>
<feature type="active site" evidence="1">
    <location>
        <position position="158"/>
    </location>
</feature>
<feature type="active site" description="Proton acceptor; for phosphorylation activity. Proton donor; for dephosphorylation activity" evidence="1">
    <location>
        <position position="176"/>
    </location>
</feature>
<feature type="active site" evidence="1">
    <location>
        <position position="243"/>
    </location>
</feature>
<feature type="binding site" evidence="1">
    <location>
        <begin position="152"/>
        <end position="159"/>
    </location>
    <ligand>
        <name>ATP</name>
        <dbReference type="ChEBI" id="CHEBI:30616"/>
    </ligand>
</feature>
<feature type="binding site" evidence="1">
    <location>
        <position position="159"/>
    </location>
    <ligand>
        <name>Mg(2+)</name>
        <dbReference type="ChEBI" id="CHEBI:18420"/>
    </ligand>
</feature>
<feature type="binding site" evidence="1">
    <location>
        <position position="202"/>
    </location>
    <ligand>
        <name>Mg(2+)</name>
        <dbReference type="ChEBI" id="CHEBI:18420"/>
    </ligand>
</feature>
<comment type="function">
    <text evidence="1">Catalyzes the ATP- as well as the pyrophosphate-dependent phosphorylation of a specific serine residue in HPr, a phosphocarrier protein of the phosphoenolpyruvate-dependent sugar phosphotransferase system (PTS). HprK/P also catalyzes the pyrophosphate-producing, inorganic phosphate-dependent dephosphorylation (phosphorolysis) of seryl-phosphorylated HPr (P-Ser-HPr).</text>
</comment>
<comment type="catalytic activity">
    <reaction evidence="1">
        <text>[HPr protein]-L-serine + ATP = [HPr protein]-O-phospho-L-serine + ADP + H(+)</text>
        <dbReference type="Rhea" id="RHEA:46600"/>
        <dbReference type="Rhea" id="RHEA-COMP:11602"/>
        <dbReference type="Rhea" id="RHEA-COMP:11603"/>
        <dbReference type="ChEBI" id="CHEBI:15378"/>
        <dbReference type="ChEBI" id="CHEBI:29999"/>
        <dbReference type="ChEBI" id="CHEBI:30616"/>
        <dbReference type="ChEBI" id="CHEBI:83421"/>
        <dbReference type="ChEBI" id="CHEBI:456216"/>
    </reaction>
</comment>
<comment type="catalytic activity">
    <reaction evidence="1">
        <text>[HPr protein]-O-phospho-L-serine + phosphate + H(+) = [HPr protein]-L-serine + diphosphate</text>
        <dbReference type="Rhea" id="RHEA:46604"/>
        <dbReference type="Rhea" id="RHEA-COMP:11602"/>
        <dbReference type="Rhea" id="RHEA-COMP:11603"/>
        <dbReference type="ChEBI" id="CHEBI:15378"/>
        <dbReference type="ChEBI" id="CHEBI:29999"/>
        <dbReference type="ChEBI" id="CHEBI:33019"/>
        <dbReference type="ChEBI" id="CHEBI:43474"/>
        <dbReference type="ChEBI" id="CHEBI:83421"/>
    </reaction>
</comment>
<comment type="cofactor">
    <cofactor evidence="1">
        <name>Mg(2+)</name>
        <dbReference type="ChEBI" id="CHEBI:18420"/>
    </cofactor>
</comment>
<comment type="subunit">
    <text evidence="1">Homohexamer.</text>
</comment>
<comment type="domain">
    <text evidence="1">The Walker A ATP-binding motif also binds Pi and PPi.</text>
</comment>
<comment type="miscellaneous">
    <text evidence="1">Both phosphorylation and phosphorolysis are carried out by the same active site and suggest a common mechanism for both reactions.</text>
</comment>
<comment type="similarity">
    <text evidence="1">Belongs to the HPrK/P family.</text>
</comment>
<dbReference type="EC" id="2.7.11.-" evidence="1"/>
<dbReference type="EC" id="2.7.4.-" evidence="1"/>
<dbReference type="EMBL" id="CP000805">
    <property type="protein sequence ID" value="ACD71011.1"/>
    <property type="molecule type" value="Genomic_DNA"/>
</dbReference>
<dbReference type="SMR" id="B2S3I2"/>
<dbReference type="KEGG" id="tpp:TPASS_0591"/>
<dbReference type="Proteomes" id="UP000001202">
    <property type="component" value="Chromosome"/>
</dbReference>
<dbReference type="GO" id="GO:0005524">
    <property type="term" value="F:ATP binding"/>
    <property type="evidence" value="ECO:0007669"/>
    <property type="project" value="UniProtKB-UniRule"/>
</dbReference>
<dbReference type="GO" id="GO:0000287">
    <property type="term" value="F:magnesium ion binding"/>
    <property type="evidence" value="ECO:0007669"/>
    <property type="project" value="UniProtKB-UniRule"/>
</dbReference>
<dbReference type="GO" id="GO:0000155">
    <property type="term" value="F:phosphorelay sensor kinase activity"/>
    <property type="evidence" value="ECO:0007669"/>
    <property type="project" value="InterPro"/>
</dbReference>
<dbReference type="GO" id="GO:0004674">
    <property type="term" value="F:protein serine/threonine kinase activity"/>
    <property type="evidence" value="ECO:0007669"/>
    <property type="project" value="UniProtKB-KW"/>
</dbReference>
<dbReference type="GO" id="GO:0004712">
    <property type="term" value="F:protein serine/threonine/tyrosine kinase activity"/>
    <property type="evidence" value="ECO:0007669"/>
    <property type="project" value="UniProtKB-UniRule"/>
</dbReference>
<dbReference type="GO" id="GO:0006109">
    <property type="term" value="P:regulation of carbohydrate metabolic process"/>
    <property type="evidence" value="ECO:0007669"/>
    <property type="project" value="UniProtKB-UniRule"/>
</dbReference>
<dbReference type="CDD" id="cd01918">
    <property type="entry name" value="HprK_C"/>
    <property type="match status" value="1"/>
</dbReference>
<dbReference type="FunFam" id="3.40.50.300:FF:000174">
    <property type="entry name" value="HPr kinase/phosphorylase"/>
    <property type="match status" value="1"/>
</dbReference>
<dbReference type="Gene3D" id="3.40.1390.20">
    <property type="entry name" value="HprK N-terminal domain-like"/>
    <property type="match status" value="1"/>
</dbReference>
<dbReference type="Gene3D" id="3.40.50.300">
    <property type="entry name" value="P-loop containing nucleotide triphosphate hydrolases"/>
    <property type="match status" value="1"/>
</dbReference>
<dbReference type="HAMAP" id="MF_01249">
    <property type="entry name" value="HPr_kinase"/>
    <property type="match status" value="1"/>
</dbReference>
<dbReference type="InterPro" id="IPR003755">
    <property type="entry name" value="HPr(Ser)_kin/Pase"/>
</dbReference>
<dbReference type="InterPro" id="IPR011104">
    <property type="entry name" value="Hpr_kin/Pase_C"/>
</dbReference>
<dbReference type="InterPro" id="IPR011126">
    <property type="entry name" value="Hpr_kin/Pase_Hpr_N"/>
</dbReference>
<dbReference type="InterPro" id="IPR027417">
    <property type="entry name" value="P-loop_NTPase"/>
</dbReference>
<dbReference type="InterPro" id="IPR028979">
    <property type="entry name" value="Ser_kin/Pase_Hpr-like_N_sf"/>
</dbReference>
<dbReference type="NCBIfam" id="TIGR00679">
    <property type="entry name" value="hpr-ser"/>
    <property type="match status" value="1"/>
</dbReference>
<dbReference type="PANTHER" id="PTHR30305:SF1">
    <property type="entry name" value="HPR KINASE_PHOSPHORYLASE"/>
    <property type="match status" value="1"/>
</dbReference>
<dbReference type="PANTHER" id="PTHR30305">
    <property type="entry name" value="PROTEIN YJDM-RELATED"/>
    <property type="match status" value="1"/>
</dbReference>
<dbReference type="Pfam" id="PF07475">
    <property type="entry name" value="Hpr_kinase_C"/>
    <property type="match status" value="1"/>
</dbReference>
<dbReference type="Pfam" id="PF02603">
    <property type="entry name" value="Hpr_kinase_N"/>
    <property type="match status" value="1"/>
</dbReference>
<dbReference type="SUPFAM" id="SSF75138">
    <property type="entry name" value="HprK N-terminal domain-like"/>
    <property type="match status" value="1"/>
</dbReference>
<dbReference type="SUPFAM" id="SSF53795">
    <property type="entry name" value="PEP carboxykinase-like"/>
    <property type="match status" value="1"/>
</dbReference>
<protein>
    <recommendedName>
        <fullName evidence="1">HPr kinase/phosphorylase</fullName>
        <shortName evidence="1">HPrK/P</shortName>
        <ecNumber evidence="1">2.7.11.-</ecNumber>
        <ecNumber evidence="1">2.7.4.-</ecNumber>
    </recommendedName>
    <alternativeName>
        <fullName evidence="1">HPr(Ser) kinase/phosphorylase</fullName>
    </alternativeName>
</protein>
<evidence type="ECO:0000255" key="1">
    <source>
        <dbReference type="HAMAP-Rule" id="MF_01249"/>
    </source>
</evidence>
<organism>
    <name type="scientific">Treponema pallidum subsp. pallidum (strain SS14)</name>
    <dbReference type="NCBI Taxonomy" id="455434"/>
    <lineage>
        <taxon>Bacteria</taxon>
        <taxon>Pseudomonadati</taxon>
        <taxon>Spirochaetota</taxon>
        <taxon>Spirochaetia</taxon>
        <taxon>Spirochaetales</taxon>
        <taxon>Treponemataceae</taxon>
        <taxon>Treponema</taxon>
    </lineage>
</organism>
<proteinExistence type="inferred from homology"/>
<accession>B2S3I2</accession>
<sequence>MLKLDLKERDSLDLRCIAGHHGLANPITISDLNRPGLVLSGFFDFVAYRRIQLFGRGEHAYLLALLEQGRYGAIEKMFTFDLPCCIFSHGITPPEKFLHLAEPSSCPILVTRLTSSELSLRLMRVLSNIFAPTIALHGVLVEVYGVGILISGDSGVGKSETALELIERGHRLVADDLVEISCVNGNSLIGRGVHKSIGHHMEIRGLGIINITQLYGVGSIRERKEVQMVVQLEEWNSSKAYDRLGTQELNTTILDVSVPLIEIPVRPGRNIPIILETAAMNERLKRMGYFSAKEFNQSVLKLMEQNAAHAPYYRPDDTY</sequence>
<reference key="1">
    <citation type="journal article" date="2008" name="BMC Microbiol.">
        <title>Complete genome sequence of Treponema pallidum ssp. pallidum strain SS14 determined with oligonucleotide arrays.</title>
        <authorList>
            <person name="Matejkova P."/>
            <person name="Strouhal M."/>
            <person name="Smajs D."/>
            <person name="Norris S.J."/>
            <person name="Palzkill T."/>
            <person name="Petrosino J.F."/>
            <person name="Sodergren E."/>
            <person name="Norton J.E."/>
            <person name="Singh J."/>
            <person name="Richmond T.A."/>
            <person name="Molla M.N."/>
            <person name="Albert T.J."/>
            <person name="Weinstock G.M."/>
        </authorList>
    </citation>
    <scope>NUCLEOTIDE SEQUENCE [LARGE SCALE GENOMIC DNA]</scope>
    <source>
        <strain>SS14</strain>
    </source>
</reference>
<gene>
    <name evidence="1" type="primary">hprK</name>
    <name type="ordered locus">TPASS_0591</name>
</gene>
<name>HPRK_TREPS</name>